<accession>Q5JJG4</accession>
<proteinExistence type="evidence at protein level"/>
<protein>
    <recommendedName>
        <fullName evidence="1">Large ribosomal subunit protein uL6</fullName>
    </recommendedName>
    <alternativeName>
        <fullName evidence="3">50S ribosomal protein L6</fullName>
    </alternativeName>
</protein>
<keyword id="KW-0002">3D-structure</keyword>
<keyword id="KW-1185">Reference proteome</keyword>
<keyword id="KW-0687">Ribonucleoprotein</keyword>
<keyword id="KW-0689">Ribosomal protein</keyword>
<keyword id="KW-0694">RNA-binding</keyword>
<keyword id="KW-0699">rRNA-binding</keyword>
<feature type="chain" id="PRO_0000260997" description="Large ribosomal subunit protein uL6">
    <location>
        <begin position="1"/>
        <end position="184"/>
    </location>
</feature>
<name>RL6_THEKO</name>
<organism>
    <name type="scientific">Thermococcus kodakarensis (strain ATCC BAA-918 / JCM 12380 / KOD1)</name>
    <name type="common">Pyrococcus kodakaraensis (strain KOD1)</name>
    <dbReference type="NCBI Taxonomy" id="69014"/>
    <lineage>
        <taxon>Archaea</taxon>
        <taxon>Methanobacteriati</taxon>
        <taxon>Methanobacteriota</taxon>
        <taxon>Thermococci</taxon>
        <taxon>Thermococcales</taxon>
        <taxon>Thermococcaceae</taxon>
        <taxon>Thermococcus</taxon>
    </lineage>
</organism>
<reference key="1">
    <citation type="journal article" date="2005" name="Genome Res.">
        <title>Complete genome sequence of the hyperthermophilic archaeon Thermococcus kodakaraensis KOD1 and comparison with Pyrococcus genomes.</title>
        <authorList>
            <person name="Fukui T."/>
            <person name="Atomi H."/>
            <person name="Kanai T."/>
            <person name="Matsumi R."/>
            <person name="Fujiwara S."/>
            <person name="Imanaka T."/>
        </authorList>
    </citation>
    <scope>NUCLEOTIDE SEQUENCE [LARGE SCALE GENOMIC DNA]</scope>
    <source>
        <strain>ATCC BAA-918 / JCM 12380 / KOD1</strain>
    </source>
</reference>
<reference evidence="4 5 6" key="2">
    <citation type="journal article" date="2020" name="Nature">
        <title>Dynamic RNA acetylation revealed by quantitative cross-evolutionary mapping.</title>
        <authorList>
            <person name="Sas-Chen A."/>
            <person name="Thomas J.M."/>
            <person name="Matzov D."/>
            <person name="Taoka M."/>
            <person name="Nance K.D."/>
            <person name="Nir R."/>
            <person name="Bryson K.M."/>
            <person name="Shachar R."/>
            <person name="Liman G.L.S."/>
            <person name="Burkhart B.W."/>
            <person name="Gamage S.T."/>
            <person name="Nobe Y."/>
            <person name="Briney C.A."/>
            <person name="Levy M.J."/>
            <person name="Fuchs R.T."/>
            <person name="Robb G.B."/>
            <person name="Hartmann J."/>
            <person name="Sharma S."/>
            <person name="Lin Q."/>
            <person name="Florens L."/>
            <person name="Washburn M.P."/>
            <person name="Isobe T."/>
            <person name="Santangelo T.J."/>
            <person name="Shalev-Benami M."/>
            <person name="Meier J.L."/>
            <person name="Schwartz S."/>
        </authorList>
    </citation>
    <scope>STRUCTURE BY ELECTRON MICROSCOPY (2.55 ANGSTROMS) IN 70S RIBOSOME</scope>
    <scope>SUBUNIT</scope>
    <source>
        <strain>ATCC BAA-918 / TS559</strain>
    </source>
</reference>
<dbReference type="EMBL" id="AP006878">
    <property type="protein sequence ID" value="BAD85714.1"/>
    <property type="molecule type" value="Genomic_DNA"/>
</dbReference>
<dbReference type="RefSeq" id="WP_011250476.1">
    <property type="nucleotide sequence ID" value="NC_006624.1"/>
</dbReference>
<dbReference type="PDB" id="6SKF">
    <property type="method" value="EM"/>
    <property type="resolution" value="2.95 A"/>
    <property type="chains" value="BG=1-184"/>
</dbReference>
<dbReference type="PDB" id="6SKG">
    <property type="method" value="EM"/>
    <property type="resolution" value="2.65 A"/>
    <property type="chains" value="BG=1-184"/>
</dbReference>
<dbReference type="PDB" id="6TH6">
    <property type="method" value="EM"/>
    <property type="resolution" value="2.55 A"/>
    <property type="chains" value="BG=1-184"/>
</dbReference>
<dbReference type="PDBsum" id="6SKF"/>
<dbReference type="PDBsum" id="6SKG"/>
<dbReference type="PDBsum" id="6TH6"/>
<dbReference type="EMDB" id="EMD-10223"/>
<dbReference type="EMDB" id="EMD-10224"/>
<dbReference type="EMDB" id="EMD-10503"/>
<dbReference type="SMR" id="Q5JJG4"/>
<dbReference type="FunCoup" id="Q5JJG4">
    <property type="interactions" value="130"/>
</dbReference>
<dbReference type="STRING" id="69014.TK1525"/>
<dbReference type="EnsemblBacteria" id="BAD85714">
    <property type="protein sequence ID" value="BAD85714"/>
    <property type="gene ID" value="TK1525"/>
</dbReference>
<dbReference type="GeneID" id="78448053"/>
<dbReference type="KEGG" id="tko:TK1525"/>
<dbReference type="PATRIC" id="fig|69014.16.peg.1485"/>
<dbReference type="eggNOG" id="arCOG04090">
    <property type="taxonomic scope" value="Archaea"/>
</dbReference>
<dbReference type="HOGENOM" id="CLU_065464_0_0_2"/>
<dbReference type="InParanoid" id="Q5JJG4"/>
<dbReference type="OrthoDB" id="7144at2157"/>
<dbReference type="PhylomeDB" id="Q5JJG4"/>
<dbReference type="Proteomes" id="UP000000536">
    <property type="component" value="Chromosome"/>
</dbReference>
<dbReference type="GO" id="GO:0022625">
    <property type="term" value="C:cytosolic large ribosomal subunit"/>
    <property type="evidence" value="ECO:0000318"/>
    <property type="project" value="GO_Central"/>
</dbReference>
<dbReference type="GO" id="GO:0019843">
    <property type="term" value="F:rRNA binding"/>
    <property type="evidence" value="ECO:0007669"/>
    <property type="project" value="UniProtKB-UniRule"/>
</dbReference>
<dbReference type="GO" id="GO:0003735">
    <property type="term" value="F:structural constituent of ribosome"/>
    <property type="evidence" value="ECO:0000318"/>
    <property type="project" value="GO_Central"/>
</dbReference>
<dbReference type="GO" id="GO:0002181">
    <property type="term" value="P:cytoplasmic translation"/>
    <property type="evidence" value="ECO:0000318"/>
    <property type="project" value="GO_Central"/>
</dbReference>
<dbReference type="FunFam" id="3.90.930.12:FF:000008">
    <property type="entry name" value="50S ribosomal protein L6"/>
    <property type="match status" value="1"/>
</dbReference>
<dbReference type="FunFam" id="3.90.930.12:FF:000004">
    <property type="entry name" value="60S ribosomal protein L9"/>
    <property type="match status" value="1"/>
</dbReference>
<dbReference type="Gene3D" id="3.90.930.12">
    <property type="entry name" value="Ribosomal protein L6, alpha-beta domain"/>
    <property type="match status" value="2"/>
</dbReference>
<dbReference type="HAMAP" id="MF_01365_A">
    <property type="entry name" value="Ribosomal_uL6_A"/>
    <property type="match status" value="1"/>
</dbReference>
<dbReference type="InterPro" id="IPR000702">
    <property type="entry name" value="Ribosomal_uL6-like"/>
</dbReference>
<dbReference type="InterPro" id="IPR036789">
    <property type="entry name" value="Ribosomal_uL6-like_a/b-dom_sf"/>
</dbReference>
<dbReference type="InterPro" id="IPR020040">
    <property type="entry name" value="Ribosomal_uL6_a/b-dom"/>
</dbReference>
<dbReference type="InterPro" id="IPR019907">
    <property type="entry name" value="Ribosomal_uL6_arc"/>
</dbReference>
<dbReference type="InterPro" id="IPR002359">
    <property type="entry name" value="Ribosomal_uL6_CS2"/>
</dbReference>
<dbReference type="NCBIfam" id="NF004037">
    <property type="entry name" value="PRK05518.1"/>
    <property type="match status" value="1"/>
</dbReference>
<dbReference type="NCBIfam" id="TIGR03653">
    <property type="entry name" value="uL6_arch"/>
    <property type="match status" value="1"/>
</dbReference>
<dbReference type="PANTHER" id="PTHR11655:SF16">
    <property type="entry name" value="60S RIBOSOMAL PROTEIN L9"/>
    <property type="match status" value="1"/>
</dbReference>
<dbReference type="PANTHER" id="PTHR11655">
    <property type="entry name" value="60S/50S RIBOSOMAL PROTEIN L6/L9"/>
    <property type="match status" value="1"/>
</dbReference>
<dbReference type="Pfam" id="PF00347">
    <property type="entry name" value="Ribosomal_L6"/>
    <property type="match status" value="2"/>
</dbReference>
<dbReference type="PIRSF" id="PIRSF002162">
    <property type="entry name" value="Ribosomal_L6"/>
    <property type="match status" value="1"/>
</dbReference>
<dbReference type="SUPFAM" id="SSF56053">
    <property type="entry name" value="Ribosomal protein L6"/>
    <property type="match status" value="2"/>
</dbReference>
<dbReference type="PROSITE" id="PS00700">
    <property type="entry name" value="RIBOSOMAL_L6_2"/>
    <property type="match status" value="1"/>
</dbReference>
<evidence type="ECO:0000255" key="1">
    <source>
        <dbReference type="HAMAP-Rule" id="MF_01365"/>
    </source>
</evidence>
<evidence type="ECO:0000269" key="2">
    <source>
    </source>
</evidence>
<evidence type="ECO:0000305" key="3"/>
<evidence type="ECO:0007744" key="4">
    <source>
        <dbReference type="PDB" id="6SKF"/>
    </source>
</evidence>
<evidence type="ECO:0007744" key="5">
    <source>
        <dbReference type="PDB" id="6SKG"/>
    </source>
</evidence>
<evidence type="ECO:0007744" key="6">
    <source>
        <dbReference type="PDB" id="6TH6"/>
    </source>
</evidence>
<comment type="function">
    <text evidence="1">This protein binds to the 23S rRNA, and is important in its secondary structure. It is located near the subunit interface in the base of the L7/L12 stalk, and near the tRNA binding site of the peptidyltransferase center.</text>
</comment>
<comment type="subunit">
    <text evidence="1 2">Part of the 50S ribosomal subunit.</text>
</comment>
<comment type="similarity">
    <text evidence="1">Belongs to the universal ribosomal protein uL6 family.</text>
</comment>
<sequence length="184" mass="20854">MPVDAWIREEIEIPEGVEVTVEGNTVKVKGPKGELQRELKYPGVQIFTEDGKVVIYKEFPRKKDVAIVRTFKAHINNMIKGVTEGFKYRLKVVYSHFPMTVKVQGDEVVIENFLGEKNPRRAKILPGVTVKVKGSEIEVEGIDKEAVGQTAANIEQATRITKWDRRVFQDGIYIVEKAGKPIKF</sequence>
<gene>
    <name evidence="1" type="primary">rpl6</name>
    <name type="ordered locus">TK1525</name>
</gene>